<accession>P10176</accession>
<accession>P15955</accession>
<feature type="transit peptide" description="Mitochondrion" evidence="3">
    <location>
        <begin position="1"/>
        <end position="25"/>
    </location>
</feature>
<feature type="chain" id="PRO_0000006186" description="Cytochrome c oxidase subunit 8A, mitochondrial">
    <location>
        <begin position="26"/>
        <end position="69"/>
    </location>
</feature>
<feature type="topological domain" description="Mitochondrial matrix" evidence="5">
    <location>
        <begin position="26"/>
        <end position="36"/>
    </location>
</feature>
<feature type="transmembrane region" description="Helical" evidence="1">
    <location>
        <begin position="37"/>
        <end position="60"/>
    </location>
</feature>
<feature type="topological domain" description="Mitochondrial intermembrane" evidence="5">
    <location>
        <begin position="61"/>
        <end position="69"/>
    </location>
</feature>
<feature type="short sequence motif" description="SIFI-degron" evidence="6">
    <location>
        <begin position="2"/>
        <end position="19"/>
    </location>
</feature>
<feature type="helix" evidence="8">
    <location>
        <begin position="37"/>
        <end position="60"/>
    </location>
</feature>
<feature type="helix" evidence="8">
    <location>
        <begin position="62"/>
        <end position="66"/>
    </location>
</feature>
<keyword id="KW-0002">3D-structure</keyword>
<keyword id="KW-0903">Direct protein sequencing</keyword>
<keyword id="KW-0472">Membrane</keyword>
<keyword id="KW-0496">Mitochondrion</keyword>
<keyword id="KW-0999">Mitochondrion inner membrane</keyword>
<keyword id="KW-1274">Primary mitochondrial disease</keyword>
<keyword id="KW-1267">Proteomics identification</keyword>
<keyword id="KW-1185">Reference proteome</keyword>
<keyword id="KW-0809">Transit peptide</keyword>
<keyword id="KW-0812">Transmembrane</keyword>
<keyword id="KW-1133">Transmembrane helix</keyword>
<keyword id="KW-0832">Ubl conjugation</keyword>
<evidence type="ECO:0000250" key="1">
    <source>
        <dbReference type="UniProtKB" id="P10175"/>
    </source>
</evidence>
<evidence type="ECO:0000269" key="2">
    <source>
    </source>
</evidence>
<evidence type="ECO:0000269" key="3">
    <source>
    </source>
</evidence>
<evidence type="ECO:0000269" key="4">
    <source>
    </source>
</evidence>
<evidence type="ECO:0000269" key="5">
    <source>
    </source>
</evidence>
<evidence type="ECO:0000269" key="6">
    <source>
    </source>
</evidence>
<evidence type="ECO:0000305" key="7"/>
<evidence type="ECO:0007829" key="8">
    <source>
        <dbReference type="PDB" id="8D4T"/>
    </source>
</evidence>
<reference key="1">
    <citation type="journal article" date="1989" name="J. Biol. Chem.">
        <title>A gene specifying subunit VIII of human cytochrome c oxidase is localized to chromosome 11 and is expressed in both muscle and non-muscle tissues.</title>
        <authorList>
            <person name="Rizzuto R."/>
            <person name="Nakase H."/>
            <person name="Darras B."/>
            <person name="Francke U."/>
            <person name="Fabrizi G.M."/>
            <person name="Mengel T."/>
            <person name="Walsh F."/>
            <person name="Kadenbach B."/>
            <person name="Dimauro S."/>
            <person name="Schon E.A."/>
        </authorList>
    </citation>
    <scope>NUCLEOTIDE SEQUENCE [MRNA]</scope>
    <source>
        <tissue>Liver</tissue>
    </source>
</reference>
<reference key="2">
    <citation type="journal article" date="2004" name="Genome Res.">
        <title>The status, quality, and expansion of the NIH full-length cDNA project: the Mammalian Gene Collection (MGC).</title>
        <authorList>
            <consortium name="The MGC Project Team"/>
        </authorList>
    </citation>
    <scope>NUCLEOTIDE SEQUENCE [LARGE SCALE MRNA]</scope>
    <source>
        <tissue>Pancreas</tissue>
    </source>
</reference>
<reference key="3">
    <citation type="journal article" date="1988" name="FEBS Lett.">
        <title>Human heart cytochrome c oxidase subunit VIII. Purification and determination of the complete amino acid sequence.</title>
        <authorList>
            <person name="van Kuilenburg A.B.P."/>
            <person name="Muijsers A.O."/>
            <person name="Demol H."/>
            <person name="Dekker H.L."/>
            <person name="van Beeumen J.J."/>
        </authorList>
    </citation>
    <scope>PROTEIN SEQUENCE OF 26-69</scope>
    <source>
        <tissue>Heart</tissue>
    </source>
</reference>
<reference key="4">
    <citation type="journal article" date="2016" name="Brain">
        <title>Loss of the smallest subunit of cytochrome c oxidase, COX8A, causes Leigh-like syndrome and epilepsy.</title>
        <authorList>
            <person name="Hallmann K."/>
            <person name="Kudin A.P."/>
            <person name="Zsurka G."/>
            <person name="Kornblum C."/>
            <person name="Reimann J."/>
            <person name="Stueve B."/>
            <person name="Waltz S."/>
            <person name="Hattingen E."/>
            <person name="Thiele H."/>
            <person name="Nuernberg P."/>
            <person name="Rueb C."/>
            <person name="Voos W."/>
            <person name="Kopatz J."/>
            <person name="Neumann H."/>
            <person name="Kunz W.S."/>
        </authorList>
    </citation>
    <scope>TISSUE SPECIFICITY</scope>
    <scope>INVOLVEMENT IN MC4DN15</scope>
</reference>
<reference key="5">
    <citation type="journal article" date="2024" name="Nature">
        <title>Stress response silencing by an E3 ligase mutated in neurodegeneration.</title>
        <authorList>
            <person name="Haakonsen D.L."/>
            <person name="Heider M."/>
            <person name="Ingersoll A.J."/>
            <person name="Vodehnal K."/>
            <person name="Witus S.R."/>
            <person name="Uenaka T."/>
            <person name="Wernig M."/>
            <person name="Rape M."/>
        </authorList>
    </citation>
    <scope>UBIQUITINATION</scope>
</reference>
<reference key="6">
    <citation type="journal article" date="2017" name="Cell">
        <title>Architecture of human mitochondrial respiratory megacomplex I2III2IV2.</title>
        <authorList>
            <person name="Guo R."/>
            <person name="Zong S."/>
            <person name="Wu M."/>
            <person name="Gu J."/>
            <person name="Yang M."/>
        </authorList>
    </citation>
    <scope>STRUCTURE BY ELECTRON MICROSCOPY (3.90 ANGSTROMS)</scope>
    <scope>SUBUNIT</scope>
</reference>
<reference key="7">
    <citation type="journal article" date="2018" name="Cell Res.">
        <title>Structure of the intact 14-subunit human cytochrome c oxidase.</title>
        <authorList>
            <person name="Zong S."/>
            <person name="Wu M."/>
            <person name="Gu J."/>
            <person name="Liu T."/>
            <person name="Guo R."/>
            <person name="Yang M."/>
        </authorList>
    </citation>
    <scope>STRUCTURE BY ELECTRON MICROSCOPY (3.60 ANGSTROMS)</scope>
</reference>
<proteinExistence type="evidence at protein level"/>
<comment type="function">
    <text evidence="1">Component of the cytochrome c oxidase, the last enzyme in the mitochondrial electron transport chain which drives oxidative phosphorylation. The respiratory chain contains 3 multisubunit complexes succinate dehydrogenase (complex II, CII), ubiquinol-cytochrome c oxidoreductase (cytochrome b-c1 complex, complex III, CIII) and cytochrome c oxidase (complex IV, CIV), that cooperate to transfer electrons derived from NADH and succinate to molecular oxygen, creating an electrochemical gradient over the inner membrane that drives transmembrane transport and the ATP synthase. Cytochrome c oxidase is the component of the respiratory chain that catalyzes the reduction of oxygen to water. Electrons originating from reduced cytochrome c in the intermembrane space (IMS) are transferred via the dinuclear copper A center (CU(A)) of subunit 2 and heme A of subunit 1 to the active site in subunit 1, a binuclear center (BNC) formed by heme A3 and copper B (CU(B)). The BNC reduces molecular oxygen to 2 water molecules using 4 electrons from cytochrome c in the IMS and 4 protons from the mitochondrial matrix.</text>
</comment>
<comment type="pathway">
    <text evidence="1">Energy metabolism; oxidative phosphorylation.</text>
</comment>
<comment type="subunit">
    <text evidence="4 5">Component of the cytochrome c oxidase (complex IV, CIV), a multisubunit enzyme composed of 14 subunits. The complex is composed of a catalytic core of 3 subunits MT-CO1, MT-CO2 and MT-CO3, encoded in the mitochondrial DNA, and 11 supernumerary subunits COX4I1 (or COX4I2), COX5A, COX5B, COX6A1 (or COX6A2), COX6B1 (or COX6B2), COX6C, COX7A2 (or COX7A1), COX7B, COX7C, COX8A and NDUFA4, which are encoded in the nuclear genome (PubMed:30030519). The complex exists as a monomer or a dimer and forms supercomplexes (SCs) in the inner mitochondrial membrane with NADH-ubiquinone oxidoreductase (complex I, CI) and ubiquinol-cytochrome c oxidoreductase (cytochrome b-c1 complex, complex III, CIII), resulting in different assemblies (supercomplex SCI(1)III(2)IV(1) and megacomplex MCI(2)III(2)IV(2)) (PubMed:28844695).</text>
</comment>
<comment type="interaction">
    <interactant intactId="EBI-3904738">
        <id>P10176</id>
    </interactant>
    <interactant intactId="EBI-749503">
        <id>Q16520</id>
        <label>BATF</label>
    </interactant>
    <organismsDiffer>false</organismsDiffer>
    <experiments>3</experiments>
</comment>
<comment type="interaction">
    <interactant intactId="EBI-3904738">
        <id>P10176</id>
    </interactant>
    <interactant intactId="EBI-10215665">
        <id>P56851</id>
        <label>EDDM3B</label>
    </interactant>
    <organismsDiffer>false</organismsDiffer>
    <experiments>3</experiments>
</comment>
<comment type="interaction">
    <interactant intactId="EBI-3904738">
        <id>P10176</id>
    </interactant>
    <interactant intactId="EBI-743122">
        <id>P43358</id>
        <label>MAGEA4</label>
    </interactant>
    <organismsDiffer>false</organismsDiffer>
    <experiments>3</experiments>
</comment>
<comment type="interaction">
    <interactant intactId="EBI-3904738">
        <id>P10176</id>
    </interactant>
    <interactant intactId="EBI-78579">
        <id>P06748</id>
        <label>NPM1</label>
    </interactant>
    <organismsDiffer>false</organismsDiffer>
    <experiments>3</experiments>
</comment>
<comment type="subcellular location">
    <subcellularLocation>
        <location evidence="5">Mitochondrion inner membrane</location>
        <topology evidence="5">Single-pass membrane protein</topology>
    </subcellularLocation>
</comment>
<comment type="tissue specificity">
    <text evidence="2">Widely expressed.</text>
</comment>
<comment type="PTM">
    <text evidence="6">In response to mitochondrial stress, the precursor protein is ubiquitinated by the SIFI complex in the cytoplasm before mitochondrial import, leading to its degradation (PubMed:38297121). Within the SIFI complex, UBR4 initiates ubiquitin chain that are further elongated or branched by KCMF1 (PubMed:38297121).</text>
</comment>
<comment type="disease" evidence="2">
    <disease id="DI-05936">
        <name>Mitochondrial complex IV deficiency, nuclear type 15</name>
        <acronym>MC4DN15</acronym>
        <description>An autosomal recessive mitochondrial disorder with onset in infancy. MC4DN15 is characterized by global developmental delay, poor feeding, metabolic acidosis, short stature, microcephaly, proximal muscle weakness, and distal spasticity. Additional manifestations include scoliosis, primary pulmonary hypertension, refractory seizures, and inability to walk. Serum and CSF lactate levels are increased. Patient tissues show decreased levels and activity of mitochondrial respiratory complex IV.</description>
        <dbReference type="MIM" id="619059"/>
    </disease>
    <text>The disease may be caused by variants affecting the gene represented in this entry.</text>
</comment>
<comment type="similarity">
    <text evidence="7">Belongs to the cytochrome c oxidase VIII family.</text>
</comment>
<name>COX8A_HUMAN</name>
<dbReference type="EMBL" id="J04823">
    <property type="protein sequence ID" value="AAA99313.1"/>
    <property type="molecule type" value="mRNA"/>
</dbReference>
<dbReference type="EMBL" id="BC063025">
    <property type="protein sequence ID" value="AAH63025.1"/>
    <property type="molecule type" value="mRNA"/>
</dbReference>
<dbReference type="CCDS" id="CCDS8054.1"/>
<dbReference type="PIR" id="A34103">
    <property type="entry name" value="OSHU8"/>
</dbReference>
<dbReference type="RefSeq" id="NP_004065.1">
    <property type="nucleotide sequence ID" value="NM_004074.3"/>
</dbReference>
<dbReference type="PDB" id="5Z62">
    <property type="method" value="EM"/>
    <property type="resolution" value="3.60 A"/>
    <property type="chains" value="M=26-68"/>
</dbReference>
<dbReference type="PDB" id="8D4T">
    <property type="method" value="EM"/>
    <property type="resolution" value="3.10 A"/>
    <property type="chains" value="M=26-68"/>
</dbReference>
<dbReference type="PDBsum" id="5Z62"/>
<dbReference type="PDBsum" id="8D4T"/>
<dbReference type="EMDB" id="EMD-27196"/>
<dbReference type="SMR" id="P10176"/>
<dbReference type="BioGRID" id="107744">
    <property type="interactions" value="323"/>
</dbReference>
<dbReference type="ComplexPortal" id="CPX-6123">
    <property type="entry name" value="Mitochondrial respiratory chain complex IV"/>
</dbReference>
<dbReference type="CORUM" id="P10176"/>
<dbReference type="FunCoup" id="P10176">
    <property type="interactions" value="386"/>
</dbReference>
<dbReference type="IntAct" id="P10176">
    <property type="interactions" value="9"/>
</dbReference>
<dbReference type="STRING" id="9606.ENSP00000321260"/>
<dbReference type="DrugBank" id="DB02659">
    <property type="generic name" value="Cholic Acid"/>
</dbReference>
<dbReference type="DrugBank" id="DB04464">
    <property type="generic name" value="N-Formylmethionine"/>
</dbReference>
<dbReference type="TCDB" id="3.D.4.11.1">
    <property type="family name" value="the proton-translocating cytochrome oxidase (cox) superfamily"/>
</dbReference>
<dbReference type="iPTMnet" id="P10176"/>
<dbReference type="PhosphoSitePlus" id="P10176"/>
<dbReference type="SwissPalm" id="P10176"/>
<dbReference type="BioMuta" id="COX8A"/>
<dbReference type="jPOST" id="P10176"/>
<dbReference type="MassIVE" id="P10176"/>
<dbReference type="PaxDb" id="9606-ENSP00000321260"/>
<dbReference type="PeptideAtlas" id="P10176"/>
<dbReference type="ProteomicsDB" id="52577"/>
<dbReference type="Pumba" id="P10176"/>
<dbReference type="TopDownProteomics" id="P10176"/>
<dbReference type="Antibodypedia" id="43917">
    <property type="antibodies" value="86 antibodies from 23 providers"/>
</dbReference>
<dbReference type="DNASU" id="1351"/>
<dbReference type="Ensembl" id="ENST00000314133.4">
    <property type="protein sequence ID" value="ENSP00000321260.3"/>
    <property type="gene ID" value="ENSG00000176340.4"/>
</dbReference>
<dbReference type="GeneID" id="1351"/>
<dbReference type="KEGG" id="hsa:1351"/>
<dbReference type="MANE-Select" id="ENST00000314133.4">
    <property type="protein sequence ID" value="ENSP00000321260.3"/>
    <property type="RefSeq nucleotide sequence ID" value="NM_004074.3"/>
    <property type="RefSeq protein sequence ID" value="NP_004065.1"/>
</dbReference>
<dbReference type="AGR" id="HGNC:2294"/>
<dbReference type="CTD" id="1351"/>
<dbReference type="DisGeNET" id="1351"/>
<dbReference type="GeneCards" id="COX8A"/>
<dbReference type="HGNC" id="HGNC:2294">
    <property type="gene designation" value="COX8A"/>
</dbReference>
<dbReference type="HPA" id="ENSG00000176340">
    <property type="expression patterns" value="Low tissue specificity"/>
</dbReference>
<dbReference type="MalaCards" id="COX8A"/>
<dbReference type="MIM" id="123870">
    <property type="type" value="gene"/>
</dbReference>
<dbReference type="MIM" id="619059">
    <property type="type" value="phenotype"/>
</dbReference>
<dbReference type="neXtProt" id="NX_P10176"/>
<dbReference type="OpenTargets" id="ENSG00000176340"/>
<dbReference type="Orphanet" id="254905">
    <property type="disease" value="Isolated cytochrome C oxidase deficiency"/>
</dbReference>
<dbReference type="PharmGKB" id="PA26814"/>
<dbReference type="VEuPathDB" id="HostDB:ENSG00000176340"/>
<dbReference type="eggNOG" id="ENOG502SA62">
    <property type="taxonomic scope" value="Eukaryota"/>
</dbReference>
<dbReference type="GeneTree" id="ENSGT00390000006255"/>
<dbReference type="HOGENOM" id="CLU_203368_0_0_1"/>
<dbReference type="InParanoid" id="P10176"/>
<dbReference type="OMA" id="AQVHSMP"/>
<dbReference type="OrthoDB" id="8931496at2759"/>
<dbReference type="PAN-GO" id="P10176">
    <property type="GO annotations" value="2 GO annotations based on evolutionary models"/>
</dbReference>
<dbReference type="PhylomeDB" id="P10176"/>
<dbReference type="TreeFam" id="TF105070"/>
<dbReference type="BioCyc" id="MetaCyc:HS11040-MONOMER"/>
<dbReference type="PathwayCommons" id="P10176"/>
<dbReference type="Reactome" id="R-HSA-5628897">
    <property type="pathway name" value="TP53 Regulates Metabolic Genes"/>
</dbReference>
<dbReference type="Reactome" id="R-HSA-611105">
    <property type="pathway name" value="Respiratory electron transport"/>
</dbReference>
<dbReference type="Reactome" id="R-HSA-9707564">
    <property type="pathway name" value="Cytoprotection by HMOX1"/>
</dbReference>
<dbReference type="Reactome" id="R-HSA-9864848">
    <property type="pathway name" value="Complex IV assembly"/>
</dbReference>
<dbReference type="SignaLink" id="P10176"/>
<dbReference type="SIGNOR" id="P10176"/>
<dbReference type="UniPathway" id="UPA00705"/>
<dbReference type="BioGRID-ORCS" id="1351">
    <property type="hits" value="57 hits in 1157 CRISPR screens"/>
</dbReference>
<dbReference type="ChiTaRS" id="COX8A">
    <property type="organism name" value="human"/>
</dbReference>
<dbReference type="GenomeRNAi" id="1351"/>
<dbReference type="Pharos" id="P10176">
    <property type="development level" value="Tbio"/>
</dbReference>
<dbReference type="PRO" id="PR:P10176"/>
<dbReference type="Proteomes" id="UP000005640">
    <property type="component" value="Chromosome 11"/>
</dbReference>
<dbReference type="RNAct" id="P10176">
    <property type="molecule type" value="protein"/>
</dbReference>
<dbReference type="Bgee" id="ENSG00000176340">
    <property type="expression patterns" value="Expressed in apex of heart and 215 other cell types or tissues"/>
</dbReference>
<dbReference type="ExpressionAtlas" id="P10176">
    <property type="expression patterns" value="baseline and differential"/>
</dbReference>
<dbReference type="GO" id="GO:0005743">
    <property type="term" value="C:mitochondrial inner membrane"/>
    <property type="evidence" value="ECO:0000304"/>
    <property type="project" value="Reactome"/>
</dbReference>
<dbReference type="GO" id="GO:0031966">
    <property type="term" value="C:mitochondrial membrane"/>
    <property type="evidence" value="ECO:0000314"/>
    <property type="project" value="ComplexPortal"/>
</dbReference>
<dbReference type="GO" id="GO:0005739">
    <property type="term" value="C:mitochondrion"/>
    <property type="evidence" value="ECO:0006056"/>
    <property type="project" value="FlyBase"/>
</dbReference>
<dbReference type="GO" id="GO:0045277">
    <property type="term" value="C:respiratory chain complex IV"/>
    <property type="evidence" value="ECO:0000318"/>
    <property type="project" value="GO_Central"/>
</dbReference>
<dbReference type="GO" id="GO:0004129">
    <property type="term" value="F:cytochrome-c oxidase activity"/>
    <property type="evidence" value="ECO:0000304"/>
    <property type="project" value="ProtInc"/>
</dbReference>
<dbReference type="GO" id="GO:0045333">
    <property type="term" value="P:cellular respiration"/>
    <property type="evidence" value="ECO:0000303"/>
    <property type="project" value="ComplexPortal"/>
</dbReference>
<dbReference type="GO" id="GO:0006091">
    <property type="term" value="P:generation of precursor metabolites and energy"/>
    <property type="evidence" value="ECO:0000304"/>
    <property type="project" value="ProtInc"/>
</dbReference>
<dbReference type="GO" id="GO:0006123">
    <property type="term" value="P:mitochondrial electron transport, cytochrome c to oxygen"/>
    <property type="evidence" value="ECO:0000303"/>
    <property type="project" value="ComplexPortal"/>
</dbReference>
<dbReference type="CDD" id="cd00930">
    <property type="entry name" value="Cyt_c_Oxidase_VIII"/>
    <property type="match status" value="1"/>
</dbReference>
<dbReference type="FunFam" id="4.10.81.10:FF:000001">
    <property type="entry name" value="Cytochrome c oxidase subunit 8B, mitochondrial"/>
    <property type="match status" value="1"/>
</dbReference>
<dbReference type="Gene3D" id="4.10.81.10">
    <property type="entry name" value="Cytochrome c oxidase, subunit 8"/>
    <property type="match status" value="1"/>
</dbReference>
<dbReference type="InterPro" id="IPR003205">
    <property type="entry name" value="Cyt_c_oxidase_su8"/>
</dbReference>
<dbReference type="InterPro" id="IPR036548">
    <property type="entry name" value="Cyt_c_oxidase_su8_sf"/>
</dbReference>
<dbReference type="PANTHER" id="PTHR16717">
    <property type="entry name" value="CYTOCHROME C OXIDASE POLYPEPTIDE VIII"/>
    <property type="match status" value="1"/>
</dbReference>
<dbReference type="PANTHER" id="PTHR16717:SF1">
    <property type="entry name" value="CYTOCHROME C OXIDASE SUBUNIT 8A, MITOCHONDRIAL"/>
    <property type="match status" value="1"/>
</dbReference>
<dbReference type="Pfam" id="PF02285">
    <property type="entry name" value="COX8"/>
    <property type="match status" value="1"/>
</dbReference>
<dbReference type="SUPFAM" id="SSF81431">
    <property type="entry name" value="Mitochondrial cytochrome c oxidase subunit VIIIb (aka IX)"/>
    <property type="match status" value="1"/>
</dbReference>
<protein>
    <recommendedName>
        <fullName>Cytochrome c oxidase subunit 8A, mitochondrial</fullName>
    </recommendedName>
    <alternativeName>
        <fullName>Cytochrome c oxidase polypeptide VIII-liver/heart</fullName>
    </alternativeName>
    <alternativeName>
        <fullName>Cytochrome c oxidase subunit 8-2</fullName>
    </alternativeName>
</protein>
<gene>
    <name type="primary">COX8A</name>
    <name type="synonym">COX8</name>
    <name type="synonym">COX8L</name>
</gene>
<sequence>MSVLTPLLLRGLTGSARRLPVPRAKIHSLPPEGKLGIMELAVGLTSCFVTFLLPAGWILSHLETYRRPE</sequence>
<organism>
    <name type="scientific">Homo sapiens</name>
    <name type="common">Human</name>
    <dbReference type="NCBI Taxonomy" id="9606"/>
    <lineage>
        <taxon>Eukaryota</taxon>
        <taxon>Metazoa</taxon>
        <taxon>Chordata</taxon>
        <taxon>Craniata</taxon>
        <taxon>Vertebrata</taxon>
        <taxon>Euteleostomi</taxon>
        <taxon>Mammalia</taxon>
        <taxon>Eutheria</taxon>
        <taxon>Euarchontoglires</taxon>
        <taxon>Primates</taxon>
        <taxon>Haplorrhini</taxon>
        <taxon>Catarrhini</taxon>
        <taxon>Hominidae</taxon>
        <taxon>Homo</taxon>
    </lineage>
</organism>